<proteinExistence type="inferred from homology"/>
<evidence type="ECO:0000255" key="1">
    <source>
        <dbReference type="HAMAP-Rule" id="MF_00152"/>
    </source>
</evidence>
<evidence type="ECO:0000305" key="2"/>
<dbReference type="EC" id="3.1.21.2" evidence="1"/>
<dbReference type="EMBL" id="AL590842">
    <property type="protein sequence ID" value="CAL19959.1"/>
    <property type="molecule type" value="Genomic_DNA"/>
</dbReference>
<dbReference type="EMBL" id="AE009952">
    <property type="protein sequence ID" value="AAM86430.1"/>
    <property type="status" value="ALT_INIT"/>
    <property type="molecule type" value="Genomic_DNA"/>
</dbReference>
<dbReference type="EMBL" id="AE017042">
    <property type="protein sequence ID" value="AAS61529.1"/>
    <property type="status" value="ALT_INIT"/>
    <property type="molecule type" value="Genomic_DNA"/>
</dbReference>
<dbReference type="PIR" id="AE0159">
    <property type="entry name" value="AE0159"/>
</dbReference>
<dbReference type="RefSeq" id="WP_002208791.1">
    <property type="nucleotide sequence ID" value="NZ_WUCM01000013.1"/>
</dbReference>
<dbReference type="RefSeq" id="YP_002346331.1">
    <property type="nucleotide sequence ID" value="NC_003143.1"/>
</dbReference>
<dbReference type="SMR" id="Q8ZGJ1"/>
<dbReference type="IntAct" id="Q8ZGJ1">
    <property type="interactions" value="1"/>
</dbReference>
<dbReference type="STRING" id="214092.YPO1306"/>
<dbReference type="PaxDb" id="214092-YPO1306"/>
<dbReference type="DNASU" id="1147826"/>
<dbReference type="EnsemblBacteria" id="AAS61529">
    <property type="protein sequence ID" value="AAS61529"/>
    <property type="gene ID" value="YP_1286"/>
</dbReference>
<dbReference type="GeneID" id="57977438"/>
<dbReference type="KEGG" id="ype:YPO1306"/>
<dbReference type="KEGG" id="ypk:y2879"/>
<dbReference type="KEGG" id="ypm:YP_1286"/>
<dbReference type="PATRIC" id="fig|214092.21.peg.1616"/>
<dbReference type="eggNOG" id="COG0648">
    <property type="taxonomic scope" value="Bacteria"/>
</dbReference>
<dbReference type="HOGENOM" id="CLU_025885_0_4_6"/>
<dbReference type="OMA" id="HPGSHLR"/>
<dbReference type="OrthoDB" id="9805666at2"/>
<dbReference type="Proteomes" id="UP000000815">
    <property type="component" value="Chromosome"/>
</dbReference>
<dbReference type="Proteomes" id="UP000001019">
    <property type="component" value="Chromosome"/>
</dbReference>
<dbReference type="Proteomes" id="UP000002490">
    <property type="component" value="Chromosome"/>
</dbReference>
<dbReference type="GO" id="GO:0008833">
    <property type="term" value="F:deoxyribonuclease IV (phage-T4-induced) activity"/>
    <property type="evidence" value="ECO:0007669"/>
    <property type="project" value="UniProtKB-UniRule"/>
</dbReference>
<dbReference type="GO" id="GO:0003677">
    <property type="term" value="F:DNA binding"/>
    <property type="evidence" value="ECO:0007669"/>
    <property type="project" value="InterPro"/>
</dbReference>
<dbReference type="GO" id="GO:0003906">
    <property type="term" value="F:DNA-(apurinic or apyrimidinic site) endonuclease activity"/>
    <property type="evidence" value="ECO:0000318"/>
    <property type="project" value="GO_Central"/>
</dbReference>
<dbReference type="GO" id="GO:0008081">
    <property type="term" value="F:phosphoric diester hydrolase activity"/>
    <property type="evidence" value="ECO:0000318"/>
    <property type="project" value="GO_Central"/>
</dbReference>
<dbReference type="GO" id="GO:0008270">
    <property type="term" value="F:zinc ion binding"/>
    <property type="evidence" value="ECO:0007669"/>
    <property type="project" value="UniProtKB-UniRule"/>
</dbReference>
<dbReference type="GO" id="GO:0006284">
    <property type="term" value="P:base-excision repair"/>
    <property type="evidence" value="ECO:0000318"/>
    <property type="project" value="GO_Central"/>
</dbReference>
<dbReference type="CDD" id="cd00019">
    <property type="entry name" value="AP2Ec"/>
    <property type="match status" value="1"/>
</dbReference>
<dbReference type="FunFam" id="3.20.20.150:FF:000001">
    <property type="entry name" value="Probable endonuclease 4"/>
    <property type="match status" value="1"/>
</dbReference>
<dbReference type="Gene3D" id="3.20.20.150">
    <property type="entry name" value="Divalent-metal-dependent TIM barrel enzymes"/>
    <property type="match status" value="1"/>
</dbReference>
<dbReference type="HAMAP" id="MF_00152">
    <property type="entry name" value="Nfo"/>
    <property type="match status" value="1"/>
</dbReference>
<dbReference type="InterPro" id="IPR001719">
    <property type="entry name" value="AP_endonuc_2"/>
</dbReference>
<dbReference type="InterPro" id="IPR018246">
    <property type="entry name" value="AP_endonuc_F2_Zn_BS"/>
</dbReference>
<dbReference type="InterPro" id="IPR036237">
    <property type="entry name" value="Xyl_isomerase-like_sf"/>
</dbReference>
<dbReference type="InterPro" id="IPR013022">
    <property type="entry name" value="Xyl_isomerase-like_TIM-brl"/>
</dbReference>
<dbReference type="NCBIfam" id="TIGR00587">
    <property type="entry name" value="nfo"/>
    <property type="match status" value="1"/>
</dbReference>
<dbReference type="NCBIfam" id="NF002199">
    <property type="entry name" value="PRK01060.1-4"/>
    <property type="match status" value="1"/>
</dbReference>
<dbReference type="PANTHER" id="PTHR21445:SF0">
    <property type="entry name" value="APURINIC-APYRIMIDINIC ENDONUCLEASE"/>
    <property type="match status" value="1"/>
</dbReference>
<dbReference type="PANTHER" id="PTHR21445">
    <property type="entry name" value="ENDONUCLEASE IV ENDODEOXYRIBONUCLEASE IV"/>
    <property type="match status" value="1"/>
</dbReference>
<dbReference type="Pfam" id="PF01261">
    <property type="entry name" value="AP_endonuc_2"/>
    <property type="match status" value="1"/>
</dbReference>
<dbReference type="SMART" id="SM00518">
    <property type="entry name" value="AP2Ec"/>
    <property type="match status" value="1"/>
</dbReference>
<dbReference type="SUPFAM" id="SSF51658">
    <property type="entry name" value="Xylose isomerase-like"/>
    <property type="match status" value="1"/>
</dbReference>
<dbReference type="PROSITE" id="PS00729">
    <property type="entry name" value="AP_NUCLEASE_F2_1"/>
    <property type="match status" value="1"/>
</dbReference>
<dbReference type="PROSITE" id="PS00730">
    <property type="entry name" value="AP_NUCLEASE_F2_2"/>
    <property type="match status" value="1"/>
</dbReference>
<dbReference type="PROSITE" id="PS00731">
    <property type="entry name" value="AP_NUCLEASE_F2_3"/>
    <property type="match status" value="1"/>
</dbReference>
<dbReference type="PROSITE" id="PS51432">
    <property type="entry name" value="AP_NUCLEASE_F2_4"/>
    <property type="match status" value="1"/>
</dbReference>
<accession>Q8ZGJ1</accession>
<accession>Q0WHA7</accession>
<comment type="function">
    <text evidence="1">Endonuclease IV plays a role in DNA repair. It cleaves phosphodiester bonds at apurinic or apyrimidinic (AP) sites, generating a 3'-hydroxyl group and a 5'-terminal sugar phosphate.</text>
</comment>
<comment type="catalytic activity">
    <reaction evidence="1">
        <text>Endonucleolytic cleavage to 5'-phosphooligonucleotide end-products.</text>
        <dbReference type="EC" id="3.1.21.2"/>
    </reaction>
</comment>
<comment type="cofactor">
    <cofactor evidence="1">
        <name>Zn(2+)</name>
        <dbReference type="ChEBI" id="CHEBI:29105"/>
    </cofactor>
    <text evidence="1">Binds 3 Zn(2+) ions.</text>
</comment>
<comment type="similarity">
    <text evidence="1">Belongs to the AP endonuclease 2 family.</text>
</comment>
<comment type="sequence caution" evidence="2">
    <conflict type="erroneous initiation">
        <sequence resource="EMBL-CDS" id="AAM86430"/>
    </conflict>
</comment>
<comment type="sequence caution" evidence="2">
    <conflict type="erroneous initiation">
        <sequence resource="EMBL-CDS" id="AAS61529"/>
    </conflict>
</comment>
<feature type="chain" id="PRO_0000190890" description="Probable endonuclease 4">
    <location>
        <begin position="1"/>
        <end position="285"/>
    </location>
</feature>
<feature type="binding site" evidence="1">
    <location>
        <position position="69"/>
    </location>
    <ligand>
        <name>Zn(2+)</name>
        <dbReference type="ChEBI" id="CHEBI:29105"/>
        <label>1</label>
    </ligand>
</feature>
<feature type="binding site" evidence="1">
    <location>
        <position position="109"/>
    </location>
    <ligand>
        <name>Zn(2+)</name>
        <dbReference type="ChEBI" id="CHEBI:29105"/>
        <label>1</label>
    </ligand>
</feature>
<feature type="binding site" evidence="1">
    <location>
        <position position="145"/>
    </location>
    <ligand>
        <name>Zn(2+)</name>
        <dbReference type="ChEBI" id="CHEBI:29105"/>
        <label>1</label>
    </ligand>
</feature>
<feature type="binding site" evidence="1">
    <location>
        <position position="145"/>
    </location>
    <ligand>
        <name>Zn(2+)</name>
        <dbReference type="ChEBI" id="CHEBI:29105"/>
        <label>2</label>
    </ligand>
</feature>
<feature type="binding site" evidence="1">
    <location>
        <position position="179"/>
    </location>
    <ligand>
        <name>Zn(2+)</name>
        <dbReference type="ChEBI" id="CHEBI:29105"/>
        <label>2</label>
    </ligand>
</feature>
<feature type="binding site" evidence="1">
    <location>
        <position position="182"/>
    </location>
    <ligand>
        <name>Zn(2+)</name>
        <dbReference type="ChEBI" id="CHEBI:29105"/>
        <label>3</label>
    </ligand>
</feature>
<feature type="binding site" evidence="1">
    <location>
        <position position="216"/>
    </location>
    <ligand>
        <name>Zn(2+)</name>
        <dbReference type="ChEBI" id="CHEBI:29105"/>
        <label>2</label>
    </ligand>
</feature>
<feature type="binding site" evidence="1">
    <location>
        <position position="229"/>
    </location>
    <ligand>
        <name>Zn(2+)</name>
        <dbReference type="ChEBI" id="CHEBI:29105"/>
        <label>3</label>
    </ligand>
</feature>
<feature type="binding site" evidence="1">
    <location>
        <position position="231"/>
    </location>
    <ligand>
        <name>Zn(2+)</name>
        <dbReference type="ChEBI" id="CHEBI:29105"/>
        <label>3</label>
    </ligand>
</feature>
<feature type="binding site" evidence="1">
    <location>
        <position position="261"/>
    </location>
    <ligand>
        <name>Zn(2+)</name>
        <dbReference type="ChEBI" id="CHEBI:29105"/>
        <label>2</label>
    </ligand>
</feature>
<reference key="1">
    <citation type="journal article" date="2001" name="Nature">
        <title>Genome sequence of Yersinia pestis, the causative agent of plague.</title>
        <authorList>
            <person name="Parkhill J."/>
            <person name="Wren B.W."/>
            <person name="Thomson N.R."/>
            <person name="Titball R.W."/>
            <person name="Holden M.T.G."/>
            <person name="Prentice M.B."/>
            <person name="Sebaihia M."/>
            <person name="James K.D."/>
            <person name="Churcher C.M."/>
            <person name="Mungall K.L."/>
            <person name="Baker S."/>
            <person name="Basham D."/>
            <person name="Bentley S.D."/>
            <person name="Brooks K."/>
            <person name="Cerdeno-Tarraga A.-M."/>
            <person name="Chillingworth T."/>
            <person name="Cronin A."/>
            <person name="Davies R.M."/>
            <person name="Davis P."/>
            <person name="Dougan G."/>
            <person name="Feltwell T."/>
            <person name="Hamlin N."/>
            <person name="Holroyd S."/>
            <person name="Jagels K."/>
            <person name="Karlyshev A.V."/>
            <person name="Leather S."/>
            <person name="Moule S."/>
            <person name="Oyston P.C.F."/>
            <person name="Quail M.A."/>
            <person name="Rutherford K.M."/>
            <person name="Simmonds M."/>
            <person name="Skelton J."/>
            <person name="Stevens K."/>
            <person name="Whitehead S."/>
            <person name="Barrell B.G."/>
        </authorList>
    </citation>
    <scope>NUCLEOTIDE SEQUENCE [LARGE SCALE GENOMIC DNA]</scope>
    <source>
        <strain>CO-92 / Biovar Orientalis</strain>
    </source>
</reference>
<reference key="2">
    <citation type="journal article" date="2002" name="J. Bacteriol.">
        <title>Genome sequence of Yersinia pestis KIM.</title>
        <authorList>
            <person name="Deng W."/>
            <person name="Burland V."/>
            <person name="Plunkett G. III"/>
            <person name="Boutin A."/>
            <person name="Mayhew G.F."/>
            <person name="Liss P."/>
            <person name="Perna N.T."/>
            <person name="Rose D.J."/>
            <person name="Mau B."/>
            <person name="Zhou S."/>
            <person name="Schwartz D.C."/>
            <person name="Fetherston J.D."/>
            <person name="Lindler L.E."/>
            <person name="Brubaker R.R."/>
            <person name="Plano G.V."/>
            <person name="Straley S.C."/>
            <person name="McDonough K.A."/>
            <person name="Nilles M.L."/>
            <person name="Matson J.S."/>
            <person name="Blattner F.R."/>
            <person name="Perry R.D."/>
        </authorList>
    </citation>
    <scope>NUCLEOTIDE SEQUENCE [LARGE SCALE GENOMIC DNA]</scope>
    <source>
        <strain>KIM10+ / Biovar Mediaevalis</strain>
    </source>
</reference>
<reference key="3">
    <citation type="journal article" date="2004" name="DNA Res.">
        <title>Complete genome sequence of Yersinia pestis strain 91001, an isolate avirulent to humans.</title>
        <authorList>
            <person name="Song Y."/>
            <person name="Tong Z."/>
            <person name="Wang J."/>
            <person name="Wang L."/>
            <person name="Guo Z."/>
            <person name="Han Y."/>
            <person name="Zhang J."/>
            <person name="Pei D."/>
            <person name="Zhou D."/>
            <person name="Qin H."/>
            <person name="Pang X."/>
            <person name="Han Y."/>
            <person name="Zhai J."/>
            <person name="Li M."/>
            <person name="Cui B."/>
            <person name="Qi Z."/>
            <person name="Jin L."/>
            <person name="Dai R."/>
            <person name="Chen F."/>
            <person name="Li S."/>
            <person name="Ye C."/>
            <person name="Du Z."/>
            <person name="Lin W."/>
            <person name="Wang J."/>
            <person name="Yu J."/>
            <person name="Yang H."/>
            <person name="Wang J."/>
            <person name="Huang P."/>
            <person name="Yang R."/>
        </authorList>
    </citation>
    <scope>NUCLEOTIDE SEQUENCE [LARGE SCALE GENOMIC DNA]</scope>
    <source>
        <strain>91001 / Biovar Mediaevalis</strain>
    </source>
</reference>
<protein>
    <recommendedName>
        <fullName evidence="1">Probable endonuclease 4</fullName>
        <ecNumber evidence="1">3.1.21.2</ecNumber>
    </recommendedName>
    <alternativeName>
        <fullName evidence="1">Endodeoxyribonuclease IV</fullName>
    </alternativeName>
    <alternativeName>
        <fullName evidence="1">Endonuclease IV</fullName>
    </alternativeName>
</protein>
<sequence length="285" mass="31672">MKFVGAHVSAAGGVDQAVIRAHELEATAFALFTKNQRQWRAAPLAEDVIEKFKLACEKYGYTSAQILPHDSYLINLGHPVTEALEKSREAFIDELVRCQQLGLSLLNFHPGSHLLQIDEDQCLARIAESINIALDATEGVTAVIENTAGQGSNLGFKFEHLAAIIERVEDKSRVGVCIDTCHAFAAGYDLRTEEDCEHTFAALGKIVGFQYLRGMHLNDAKSEFNSRVDRHHSLGEGNIGKTVFSYIMRDSRFDNIPLILETVNMDIWAEEIAWLKSQAEIEPSL</sequence>
<name>END4_YERPE</name>
<keyword id="KW-0227">DNA damage</keyword>
<keyword id="KW-0234">DNA repair</keyword>
<keyword id="KW-0255">Endonuclease</keyword>
<keyword id="KW-0378">Hydrolase</keyword>
<keyword id="KW-0479">Metal-binding</keyword>
<keyword id="KW-0540">Nuclease</keyword>
<keyword id="KW-1185">Reference proteome</keyword>
<keyword id="KW-0862">Zinc</keyword>
<organism>
    <name type="scientific">Yersinia pestis</name>
    <dbReference type="NCBI Taxonomy" id="632"/>
    <lineage>
        <taxon>Bacteria</taxon>
        <taxon>Pseudomonadati</taxon>
        <taxon>Pseudomonadota</taxon>
        <taxon>Gammaproteobacteria</taxon>
        <taxon>Enterobacterales</taxon>
        <taxon>Yersiniaceae</taxon>
        <taxon>Yersinia</taxon>
    </lineage>
</organism>
<gene>
    <name evidence="1" type="primary">nfo</name>
    <name type="ordered locus">YPO1306</name>
    <name type="ordered locus">y2879</name>
    <name type="ordered locus">YP_1286</name>
</gene>